<gene>
    <name type="ordered locus">RBE_1357</name>
</gene>
<evidence type="ECO:0000255" key="1"/>
<evidence type="ECO:0000256" key="2">
    <source>
        <dbReference type="SAM" id="MobiDB-lite"/>
    </source>
</evidence>
<organism>
    <name type="scientific">Rickettsia bellii (strain RML369-C)</name>
    <dbReference type="NCBI Taxonomy" id="336407"/>
    <lineage>
        <taxon>Bacteria</taxon>
        <taxon>Pseudomonadati</taxon>
        <taxon>Pseudomonadota</taxon>
        <taxon>Alphaproteobacteria</taxon>
        <taxon>Rickettsiales</taxon>
        <taxon>Rickettsiaceae</taxon>
        <taxon>Rickettsieae</taxon>
        <taxon>Rickettsia</taxon>
        <taxon>belli group</taxon>
    </lineage>
</organism>
<proteinExistence type="inferred from homology"/>
<accession>Q1RGS6</accession>
<keyword id="KW-0175">Coiled coil</keyword>
<keyword id="KW-0732">Signal</keyword>
<feature type="signal peptide" evidence="1">
    <location>
        <begin position="1"/>
        <end position="21"/>
    </location>
</feature>
<feature type="chain" id="PRO_0000262725" description="Uncharacterized protein RBE_1357">
    <location>
        <begin position="22"/>
        <end position="125"/>
    </location>
</feature>
<feature type="region of interest" description="Disordered" evidence="2">
    <location>
        <begin position="96"/>
        <end position="125"/>
    </location>
</feature>
<feature type="coiled-coil region" evidence="1">
    <location>
        <begin position="54"/>
        <end position="102"/>
    </location>
</feature>
<feature type="compositionally biased region" description="Basic and acidic residues" evidence="2">
    <location>
        <begin position="108"/>
        <end position="125"/>
    </location>
</feature>
<reference key="1">
    <citation type="journal article" date="2006" name="PLoS Genet.">
        <title>Genome sequence of Rickettsia bellii illuminates the role of amoebae in gene exchanges between intracellular pathogens.</title>
        <authorList>
            <person name="Ogata H."/>
            <person name="La Scola B."/>
            <person name="Audic S."/>
            <person name="Renesto P."/>
            <person name="Blanc G."/>
            <person name="Robert C."/>
            <person name="Fournier P.-E."/>
            <person name="Claverie J.-M."/>
            <person name="Raoult D."/>
        </authorList>
    </citation>
    <scope>NUCLEOTIDE SEQUENCE [LARGE SCALE GENOMIC DNA]</scope>
    <source>
        <strain>RML369-C</strain>
    </source>
</reference>
<name>Y1357_RICBR</name>
<dbReference type="EMBL" id="CP000087">
    <property type="protein sequence ID" value="ABE05438.1"/>
    <property type="molecule type" value="Genomic_DNA"/>
</dbReference>
<dbReference type="RefSeq" id="WP_011478007.1">
    <property type="nucleotide sequence ID" value="NC_007940.1"/>
</dbReference>
<dbReference type="SMR" id="Q1RGS6"/>
<dbReference type="KEGG" id="rbe:RBE_1357"/>
<dbReference type="HOGENOM" id="CLU_1968884_0_0_5"/>
<dbReference type="OrthoDB" id="7160930at2"/>
<dbReference type="Proteomes" id="UP000001951">
    <property type="component" value="Chromosome"/>
</dbReference>
<sequence>MIRNIIITISAILLLTSKGFADDTISNTSKKDTKTDITTQKILDEFYAYAGTIKPEIREEIQKYRVEIVNINKKKRELYDKLSKEAQNFLAKEQEYKQRLSSSSMATEDSKDNNTAKDNKDADKK</sequence>
<protein>
    <recommendedName>
        <fullName>Uncharacterized protein RBE_1357</fullName>
    </recommendedName>
</protein>